<evidence type="ECO:0000255" key="1">
    <source>
        <dbReference type="HAMAP-Rule" id="MF_01975"/>
    </source>
</evidence>
<sequence length="291" mass="31691">MDDEVREKLIEAGKILKQAVNEAAEKIAPGVKILEVAEFVENRIIELGAKPAFPANISINSDAAHFTPKKNDERTFKEGDVVKLDVGAHIDGYIADMAVTVDLGDNTELVKAAKEALEAAMEVVRAGVSVSEIGKAIEDAITNYGFKPIVNLTGHGLLPYLNHAPPSIYNYATEKGVTLEEGMVVAIEPFATNGVGKVGERGECEIYSLLNPRPVRMKMAREILKEVEENYKTLPFAKRWLKKAPDIIISKLAREGVLRAYPVLTEVSGGLVSQWEHTLIVEDGGATITTK</sequence>
<feature type="chain" id="PRO_0000148973" description="Methionine aminopeptidase">
    <location>
        <begin position="1"/>
        <end position="291"/>
    </location>
</feature>
<feature type="binding site" evidence="1">
    <location>
        <position position="65"/>
    </location>
    <ligand>
        <name>substrate</name>
    </ligand>
</feature>
<feature type="binding site" evidence="1">
    <location>
        <position position="85"/>
    </location>
    <ligand>
        <name>a divalent metal cation</name>
        <dbReference type="ChEBI" id="CHEBI:60240"/>
        <label>1</label>
    </ligand>
</feature>
<feature type="binding site" evidence="1">
    <location>
        <position position="96"/>
    </location>
    <ligand>
        <name>a divalent metal cation</name>
        <dbReference type="ChEBI" id="CHEBI:60240"/>
        <label>1</label>
    </ligand>
</feature>
<feature type="binding site" evidence="1">
    <location>
        <position position="96"/>
    </location>
    <ligand>
        <name>a divalent metal cation</name>
        <dbReference type="ChEBI" id="CHEBI:60240"/>
        <label>2</label>
        <note>catalytic</note>
    </ligand>
</feature>
<feature type="binding site" evidence="1">
    <location>
        <position position="155"/>
    </location>
    <ligand>
        <name>a divalent metal cation</name>
        <dbReference type="ChEBI" id="CHEBI:60240"/>
        <label>2</label>
        <note>catalytic</note>
    </ligand>
</feature>
<feature type="binding site" evidence="1">
    <location>
        <position position="163"/>
    </location>
    <ligand>
        <name>substrate</name>
    </ligand>
</feature>
<feature type="binding site" evidence="1">
    <location>
        <position position="188"/>
    </location>
    <ligand>
        <name>a divalent metal cation</name>
        <dbReference type="ChEBI" id="CHEBI:60240"/>
        <label>2</label>
        <note>catalytic</note>
    </ligand>
</feature>
<feature type="binding site" evidence="1">
    <location>
        <position position="276"/>
    </location>
    <ligand>
        <name>a divalent metal cation</name>
        <dbReference type="ChEBI" id="CHEBI:60240"/>
        <label>1</label>
    </ligand>
</feature>
<feature type="binding site" evidence="1">
    <location>
        <position position="276"/>
    </location>
    <ligand>
        <name>a divalent metal cation</name>
        <dbReference type="ChEBI" id="CHEBI:60240"/>
        <label>2</label>
        <note>catalytic</note>
    </ligand>
</feature>
<comment type="function">
    <text evidence="1">Removes the N-terminal methionine from nascent proteins. The N-terminal methionine is often cleaved when the second residue in the primary sequence is small and uncharged (Met-Ala-, Cys, Gly, Pro, Ser, Thr, or Val).</text>
</comment>
<comment type="catalytic activity">
    <reaction evidence="1">
        <text>Release of N-terminal amino acids, preferentially methionine, from peptides and arylamides.</text>
        <dbReference type="EC" id="3.4.11.18"/>
    </reaction>
</comment>
<comment type="cofactor">
    <cofactor evidence="1">
        <name>Co(2+)</name>
        <dbReference type="ChEBI" id="CHEBI:48828"/>
    </cofactor>
    <cofactor evidence="1">
        <name>Zn(2+)</name>
        <dbReference type="ChEBI" id="CHEBI:29105"/>
    </cofactor>
    <cofactor evidence="1">
        <name>Mn(2+)</name>
        <dbReference type="ChEBI" id="CHEBI:29035"/>
    </cofactor>
    <cofactor evidence="1">
        <name>Fe(2+)</name>
        <dbReference type="ChEBI" id="CHEBI:29033"/>
    </cofactor>
    <text evidence="1">Binds 2 divalent metal cations per subunit. Has a high-affinity and a low affinity metal-binding site. The true nature of the physiological cofactor is under debate. The enzyme is active with cobalt, zinc, manganese or divalent iron ions. Most likely, methionine aminopeptidases function as mononuclear Fe(2+)-metalloproteases under physiological conditions, and the catalytically relevant metal-binding site has been assigned to the histidine-containing high-affinity site.</text>
</comment>
<comment type="subunit">
    <text evidence="1">Monomer.</text>
</comment>
<comment type="similarity">
    <text evidence="1">Belongs to the peptidase M24A family. Methionine aminopeptidase archaeal type 2 subfamily.</text>
</comment>
<protein>
    <recommendedName>
        <fullName evidence="1">Methionine aminopeptidase</fullName>
        <shortName evidence="1">MAP</shortName>
        <shortName evidence="1">MetAP</shortName>
        <ecNumber evidence="1">3.4.11.18</ecNumber>
    </recommendedName>
    <alternativeName>
        <fullName evidence="1">Peptidase M</fullName>
    </alternativeName>
</protein>
<gene>
    <name evidence="1" type="primary">map</name>
    <name type="ordered locus">AF_1840</name>
</gene>
<proteinExistence type="inferred from homology"/>
<reference key="1">
    <citation type="journal article" date="1997" name="Nature">
        <title>The complete genome sequence of the hyperthermophilic, sulphate-reducing archaeon Archaeoglobus fulgidus.</title>
        <authorList>
            <person name="Klenk H.-P."/>
            <person name="Clayton R.A."/>
            <person name="Tomb J.-F."/>
            <person name="White O."/>
            <person name="Nelson K.E."/>
            <person name="Ketchum K.A."/>
            <person name="Dodson R.J."/>
            <person name="Gwinn M.L."/>
            <person name="Hickey E.K."/>
            <person name="Peterson J.D."/>
            <person name="Richardson D.L."/>
            <person name="Kerlavage A.R."/>
            <person name="Graham D.E."/>
            <person name="Kyrpides N.C."/>
            <person name="Fleischmann R.D."/>
            <person name="Quackenbush J."/>
            <person name="Lee N.H."/>
            <person name="Sutton G.G."/>
            <person name="Gill S.R."/>
            <person name="Kirkness E.F."/>
            <person name="Dougherty B.A."/>
            <person name="McKenney K."/>
            <person name="Adams M.D."/>
            <person name="Loftus B.J."/>
            <person name="Peterson S.N."/>
            <person name="Reich C.I."/>
            <person name="McNeil L.K."/>
            <person name="Badger J.H."/>
            <person name="Glodek A."/>
            <person name="Zhou L."/>
            <person name="Overbeek R."/>
            <person name="Gocayne J.D."/>
            <person name="Weidman J.F."/>
            <person name="McDonald L.A."/>
            <person name="Utterback T.R."/>
            <person name="Cotton M.D."/>
            <person name="Spriggs T."/>
            <person name="Artiach P."/>
            <person name="Kaine B.P."/>
            <person name="Sykes S.M."/>
            <person name="Sadow P.W."/>
            <person name="D'Andrea K.P."/>
            <person name="Bowman C."/>
            <person name="Fujii C."/>
            <person name="Garland S.A."/>
            <person name="Mason T.M."/>
            <person name="Olsen G.J."/>
            <person name="Fraser C.M."/>
            <person name="Smith H.O."/>
            <person name="Woese C.R."/>
            <person name="Venter J.C."/>
        </authorList>
    </citation>
    <scope>NUCLEOTIDE SEQUENCE [LARGE SCALE GENOMIC DNA]</scope>
    <source>
        <strain>ATCC 49558 / DSM 4304 / JCM 9628 / NBRC 100126 / VC-16</strain>
    </source>
</reference>
<accession>O28438</accession>
<organism>
    <name type="scientific">Archaeoglobus fulgidus (strain ATCC 49558 / DSM 4304 / JCM 9628 / NBRC 100126 / VC-16)</name>
    <dbReference type="NCBI Taxonomy" id="224325"/>
    <lineage>
        <taxon>Archaea</taxon>
        <taxon>Methanobacteriati</taxon>
        <taxon>Methanobacteriota</taxon>
        <taxon>Archaeoglobi</taxon>
        <taxon>Archaeoglobales</taxon>
        <taxon>Archaeoglobaceae</taxon>
        <taxon>Archaeoglobus</taxon>
    </lineage>
</organism>
<keyword id="KW-0031">Aminopeptidase</keyword>
<keyword id="KW-0378">Hydrolase</keyword>
<keyword id="KW-0479">Metal-binding</keyword>
<keyword id="KW-0645">Protease</keyword>
<keyword id="KW-1185">Reference proteome</keyword>
<dbReference type="EC" id="3.4.11.18" evidence="1"/>
<dbReference type="EMBL" id="AE000782">
    <property type="protein sequence ID" value="AAB89413.1"/>
    <property type="molecule type" value="Genomic_DNA"/>
</dbReference>
<dbReference type="PIR" id="G69479">
    <property type="entry name" value="G69479"/>
</dbReference>
<dbReference type="RefSeq" id="WP_010879334.1">
    <property type="nucleotide sequence ID" value="NC_000917.1"/>
</dbReference>
<dbReference type="SMR" id="O28438"/>
<dbReference type="STRING" id="224325.AF_1840"/>
<dbReference type="MEROPS" id="M24.035"/>
<dbReference type="PaxDb" id="224325-AF_1840"/>
<dbReference type="EnsemblBacteria" id="AAB89413">
    <property type="protein sequence ID" value="AAB89413"/>
    <property type="gene ID" value="AF_1840"/>
</dbReference>
<dbReference type="GeneID" id="24795584"/>
<dbReference type="KEGG" id="afu:AF_1840"/>
<dbReference type="eggNOG" id="arCOG01001">
    <property type="taxonomic scope" value="Archaea"/>
</dbReference>
<dbReference type="HOGENOM" id="CLU_015857_7_0_2"/>
<dbReference type="OrthoDB" id="372008at2157"/>
<dbReference type="PhylomeDB" id="O28438"/>
<dbReference type="Proteomes" id="UP000002199">
    <property type="component" value="Chromosome"/>
</dbReference>
<dbReference type="GO" id="GO:0005737">
    <property type="term" value="C:cytoplasm"/>
    <property type="evidence" value="ECO:0007669"/>
    <property type="project" value="TreeGrafter"/>
</dbReference>
<dbReference type="GO" id="GO:0004239">
    <property type="term" value="F:initiator methionyl aminopeptidase activity"/>
    <property type="evidence" value="ECO:0007669"/>
    <property type="project" value="UniProtKB-UniRule"/>
</dbReference>
<dbReference type="GO" id="GO:0046872">
    <property type="term" value="F:metal ion binding"/>
    <property type="evidence" value="ECO:0007669"/>
    <property type="project" value="UniProtKB-UniRule"/>
</dbReference>
<dbReference type="GO" id="GO:0070006">
    <property type="term" value="F:metalloaminopeptidase activity"/>
    <property type="evidence" value="ECO:0007669"/>
    <property type="project" value="UniProtKB-UniRule"/>
</dbReference>
<dbReference type="GO" id="GO:0006508">
    <property type="term" value="P:proteolysis"/>
    <property type="evidence" value="ECO:0007669"/>
    <property type="project" value="UniProtKB-KW"/>
</dbReference>
<dbReference type="CDD" id="cd01088">
    <property type="entry name" value="MetAP2"/>
    <property type="match status" value="1"/>
</dbReference>
<dbReference type="Gene3D" id="3.90.230.10">
    <property type="entry name" value="Creatinase/methionine aminopeptidase superfamily"/>
    <property type="match status" value="1"/>
</dbReference>
<dbReference type="Gene3D" id="1.10.10.10">
    <property type="entry name" value="Winged helix-like DNA-binding domain superfamily/Winged helix DNA-binding domain"/>
    <property type="match status" value="1"/>
</dbReference>
<dbReference type="HAMAP" id="MF_01975">
    <property type="entry name" value="MetAP_2_arc"/>
    <property type="match status" value="1"/>
</dbReference>
<dbReference type="InterPro" id="IPR036005">
    <property type="entry name" value="Creatinase/aminopeptidase-like"/>
</dbReference>
<dbReference type="InterPro" id="IPR050247">
    <property type="entry name" value="Met_Aminopeptidase_Type2"/>
</dbReference>
<dbReference type="InterPro" id="IPR028595">
    <property type="entry name" value="MetAP_archaeal"/>
</dbReference>
<dbReference type="InterPro" id="IPR000994">
    <property type="entry name" value="Pept_M24"/>
</dbReference>
<dbReference type="InterPro" id="IPR001714">
    <property type="entry name" value="Pept_M24_MAP"/>
</dbReference>
<dbReference type="InterPro" id="IPR002468">
    <property type="entry name" value="Pept_M24A_MAP2"/>
</dbReference>
<dbReference type="InterPro" id="IPR018349">
    <property type="entry name" value="Pept_M24A_MAP2_BS"/>
</dbReference>
<dbReference type="InterPro" id="IPR036388">
    <property type="entry name" value="WH-like_DNA-bd_sf"/>
</dbReference>
<dbReference type="InterPro" id="IPR036390">
    <property type="entry name" value="WH_DNA-bd_sf"/>
</dbReference>
<dbReference type="NCBIfam" id="TIGR00501">
    <property type="entry name" value="met_pdase_II"/>
    <property type="match status" value="1"/>
</dbReference>
<dbReference type="PANTHER" id="PTHR45777">
    <property type="entry name" value="METHIONINE AMINOPEPTIDASE 2"/>
    <property type="match status" value="1"/>
</dbReference>
<dbReference type="PANTHER" id="PTHR45777:SF2">
    <property type="entry name" value="METHIONINE AMINOPEPTIDASE 2"/>
    <property type="match status" value="1"/>
</dbReference>
<dbReference type="Pfam" id="PF00557">
    <property type="entry name" value="Peptidase_M24"/>
    <property type="match status" value="1"/>
</dbReference>
<dbReference type="PRINTS" id="PR00599">
    <property type="entry name" value="MAPEPTIDASE"/>
</dbReference>
<dbReference type="SUPFAM" id="SSF55920">
    <property type="entry name" value="Creatinase/aminopeptidase"/>
    <property type="match status" value="1"/>
</dbReference>
<dbReference type="SUPFAM" id="SSF46785">
    <property type="entry name" value="Winged helix' DNA-binding domain"/>
    <property type="match status" value="1"/>
</dbReference>
<dbReference type="PROSITE" id="PS01202">
    <property type="entry name" value="MAP_2"/>
    <property type="match status" value="1"/>
</dbReference>
<name>MAP2_ARCFU</name>